<reference key="1">
    <citation type="journal article" date="2002" name="Lancet">
        <title>Genome and virulence determinants of high virulence community-acquired MRSA.</title>
        <authorList>
            <person name="Baba T."/>
            <person name="Takeuchi F."/>
            <person name="Kuroda M."/>
            <person name="Yuzawa H."/>
            <person name="Aoki K."/>
            <person name="Oguchi A."/>
            <person name="Nagai Y."/>
            <person name="Iwama N."/>
            <person name="Asano K."/>
            <person name="Naimi T."/>
            <person name="Kuroda H."/>
            <person name="Cui L."/>
            <person name="Yamamoto K."/>
            <person name="Hiramatsu K."/>
        </authorList>
    </citation>
    <scope>NUCLEOTIDE SEQUENCE [LARGE SCALE GENOMIC DNA]</scope>
    <source>
        <strain>MW2</strain>
    </source>
</reference>
<comment type="function">
    <text evidence="1">Catalyzes the condensation of the acetyl group of acetyl-CoA with 3-methyl-2-oxobutanoate (2-ketoisovalerate) to form 3-carboxy-3-hydroxy-4-methylpentanoate (2-isopropylmalate).</text>
</comment>
<comment type="catalytic activity">
    <reaction evidence="1">
        <text>3-methyl-2-oxobutanoate + acetyl-CoA + H2O = (2S)-2-isopropylmalate + CoA + H(+)</text>
        <dbReference type="Rhea" id="RHEA:21524"/>
        <dbReference type="ChEBI" id="CHEBI:1178"/>
        <dbReference type="ChEBI" id="CHEBI:11851"/>
        <dbReference type="ChEBI" id="CHEBI:15377"/>
        <dbReference type="ChEBI" id="CHEBI:15378"/>
        <dbReference type="ChEBI" id="CHEBI:57287"/>
        <dbReference type="ChEBI" id="CHEBI:57288"/>
        <dbReference type="EC" id="2.3.3.13"/>
    </reaction>
</comment>
<comment type="cofactor">
    <cofactor evidence="1">
        <name>Mn(2+)</name>
        <dbReference type="ChEBI" id="CHEBI:29035"/>
    </cofactor>
</comment>
<comment type="pathway">
    <text evidence="1">Amino-acid biosynthesis; L-leucine biosynthesis; L-leucine from 3-methyl-2-oxobutanoate: step 1/4.</text>
</comment>
<comment type="subunit">
    <text evidence="1">Homodimer.</text>
</comment>
<comment type="subcellular location">
    <subcellularLocation>
        <location evidence="1">Cytoplasm</location>
    </subcellularLocation>
</comment>
<comment type="similarity">
    <text evidence="1">Belongs to the alpha-IPM synthase/homocitrate synthase family. LeuA type 1 subfamily.</text>
</comment>
<proteinExistence type="inferred from homology"/>
<feature type="chain" id="PRO_0000140383" description="2-isopropylmalate synthase">
    <location>
        <begin position="1"/>
        <end position="509"/>
    </location>
</feature>
<feature type="domain" description="Pyruvate carboxyltransferase" evidence="1">
    <location>
        <begin position="5"/>
        <end position="267"/>
    </location>
</feature>
<feature type="region of interest" description="Regulatory domain" evidence="1">
    <location>
        <begin position="391"/>
        <end position="509"/>
    </location>
</feature>
<feature type="binding site" evidence="1">
    <location>
        <position position="14"/>
    </location>
    <ligand>
        <name>Mn(2+)</name>
        <dbReference type="ChEBI" id="CHEBI:29035"/>
    </ligand>
</feature>
<feature type="binding site" evidence="1">
    <location>
        <position position="202"/>
    </location>
    <ligand>
        <name>Mn(2+)</name>
        <dbReference type="ChEBI" id="CHEBI:29035"/>
    </ligand>
</feature>
<feature type="binding site" evidence="1">
    <location>
        <position position="204"/>
    </location>
    <ligand>
        <name>Mn(2+)</name>
        <dbReference type="ChEBI" id="CHEBI:29035"/>
    </ligand>
</feature>
<feature type="binding site" evidence="1">
    <location>
        <position position="238"/>
    </location>
    <ligand>
        <name>Mn(2+)</name>
        <dbReference type="ChEBI" id="CHEBI:29035"/>
    </ligand>
</feature>
<sequence>MSSHIQIFDTTLRDGEQTPGVNFTFDERLRIALQLEKWGVDVIEAGFPASSTGSFKSVQAIAQTLTTTAVCGLARCKKSDIDAVYEATKDAAKPVVHVFIATSPIHLEHKLKMSQEDVLASIKEHVTYAKQLFDVVQFSPEDATRTELPFLVKCVQTAVDAGATVINIPDTVGYSYHDEYAHIFKTLTESVTSSNEIIYSAHCHDDLGMAVSNSLAAIEGGARRIEGTVNGIGERAGNAALEEVALALYVRNDHYGAQTALNLEETKKTSDLISRYAGIRVPRNKAIVGQNAFSHESGIHQDGVLKHRETYEIMTPQLVGVSTTELPLGKLSGKHAFSEKLKALGYGIDKEAQIDLFKQFKAIADKKKSVSDRDIHAIIQGSEHEHQALYKLETLQLQYVSSGLQSAVVVVKDKEGHIYQDSSIGTGSIVAIYNAVDRIFQKETELIDYRINSVTEGTDAQAEVHVNLLIEGKTVNGFGIDHDILQASCKAYVEAHAKFAAENVEKVGN</sequence>
<keyword id="KW-0028">Amino-acid biosynthesis</keyword>
<keyword id="KW-0100">Branched-chain amino acid biosynthesis</keyword>
<keyword id="KW-0963">Cytoplasm</keyword>
<keyword id="KW-0432">Leucine biosynthesis</keyword>
<keyword id="KW-0464">Manganese</keyword>
<keyword id="KW-0479">Metal-binding</keyword>
<keyword id="KW-0808">Transferase</keyword>
<organism>
    <name type="scientific">Staphylococcus aureus (strain MW2)</name>
    <dbReference type="NCBI Taxonomy" id="196620"/>
    <lineage>
        <taxon>Bacteria</taxon>
        <taxon>Bacillati</taxon>
        <taxon>Bacillota</taxon>
        <taxon>Bacilli</taxon>
        <taxon>Bacillales</taxon>
        <taxon>Staphylococcaceae</taxon>
        <taxon>Staphylococcus</taxon>
    </lineage>
</organism>
<name>LEU1_STAAW</name>
<protein>
    <recommendedName>
        <fullName evidence="1">2-isopropylmalate synthase</fullName>
        <ecNumber evidence="1">2.3.3.13</ecNumber>
    </recommendedName>
    <alternativeName>
        <fullName evidence="1">Alpha-IPM synthase</fullName>
    </alternativeName>
    <alternativeName>
        <fullName evidence="1">Alpha-isopropylmalate synthase</fullName>
    </alternativeName>
</protein>
<gene>
    <name evidence="1" type="primary">leuA</name>
    <name type="ordered locus">MW1981</name>
</gene>
<dbReference type="EC" id="2.3.3.13" evidence="1"/>
<dbReference type="EMBL" id="BA000033">
    <property type="protein sequence ID" value="BAB95846.1"/>
    <property type="molecule type" value="Genomic_DNA"/>
</dbReference>
<dbReference type="RefSeq" id="WP_000094582.1">
    <property type="nucleotide sequence ID" value="NC_003923.1"/>
</dbReference>
<dbReference type="SMR" id="P58899"/>
<dbReference type="KEGG" id="sam:MW1981"/>
<dbReference type="HOGENOM" id="CLU_022158_0_1_9"/>
<dbReference type="UniPathway" id="UPA00048">
    <property type="reaction ID" value="UER00070"/>
</dbReference>
<dbReference type="GO" id="GO:0005737">
    <property type="term" value="C:cytoplasm"/>
    <property type="evidence" value="ECO:0007669"/>
    <property type="project" value="UniProtKB-SubCell"/>
</dbReference>
<dbReference type="GO" id="GO:0003852">
    <property type="term" value="F:2-isopropylmalate synthase activity"/>
    <property type="evidence" value="ECO:0007669"/>
    <property type="project" value="UniProtKB-UniRule"/>
</dbReference>
<dbReference type="GO" id="GO:0003985">
    <property type="term" value="F:acetyl-CoA C-acetyltransferase activity"/>
    <property type="evidence" value="ECO:0007669"/>
    <property type="project" value="UniProtKB-UniRule"/>
</dbReference>
<dbReference type="GO" id="GO:0030145">
    <property type="term" value="F:manganese ion binding"/>
    <property type="evidence" value="ECO:0007669"/>
    <property type="project" value="UniProtKB-UniRule"/>
</dbReference>
<dbReference type="GO" id="GO:0009098">
    <property type="term" value="P:L-leucine biosynthetic process"/>
    <property type="evidence" value="ECO:0007669"/>
    <property type="project" value="UniProtKB-UniRule"/>
</dbReference>
<dbReference type="CDD" id="cd07940">
    <property type="entry name" value="DRE_TIM_IPMS"/>
    <property type="match status" value="1"/>
</dbReference>
<dbReference type="FunFam" id="1.10.238.260:FF:000001">
    <property type="entry name" value="2-isopropylmalate synthase"/>
    <property type="match status" value="1"/>
</dbReference>
<dbReference type="FunFam" id="3.20.20.70:FF:000010">
    <property type="entry name" value="2-isopropylmalate synthase"/>
    <property type="match status" value="1"/>
</dbReference>
<dbReference type="FunFam" id="3.30.160.270:FF:000003">
    <property type="entry name" value="2-isopropylmalate synthase"/>
    <property type="match status" value="1"/>
</dbReference>
<dbReference type="Gene3D" id="1.10.238.260">
    <property type="match status" value="1"/>
</dbReference>
<dbReference type="Gene3D" id="3.30.160.270">
    <property type="match status" value="1"/>
</dbReference>
<dbReference type="Gene3D" id="3.20.20.70">
    <property type="entry name" value="Aldolase class I"/>
    <property type="match status" value="1"/>
</dbReference>
<dbReference type="HAMAP" id="MF_01025">
    <property type="entry name" value="LeuA_type1"/>
    <property type="match status" value="1"/>
</dbReference>
<dbReference type="InterPro" id="IPR050073">
    <property type="entry name" value="2-IPM_HCS-like"/>
</dbReference>
<dbReference type="InterPro" id="IPR013709">
    <property type="entry name" value="2-isopropylmalate_synth_dimer"/>
</dbReference>
<dbReference type="InterPro" id="IPR013785">
    <property type="entry name" value="Aldolase_TIM"/>
</dbReference>
<dbReference type="InterPro" id="IPR054691">
    <property type="entry name" value="LeuA/HCS_post-cat"/>
</dbReference>
<dbReference type="InterPro" id="IPR036230">
    <property type="entry name" value="LeuA_allosteric_dom_sf"/>
</dbReference>
<dbReference type="InterPro" id="IPR005671">
    <property type="entry name" value="LeuA_bact_synth"/>
</dbReference>
<dbReference type="InterPro" id="IPR000891">
    <property type="entry name" value="PYR_CT"/>
</dbReference>
<dbReference type="NCBIfam" id="TIGR00973">
    <property type="entry name" value="leuA_bact"/>
    <property type="match status" value="1"/>
</dbReference>
<dbReference type="NCBIfam" id="NF002086">
    <property type="entry name" value="PRK00915.1-3"/>
    <property type="match status" value="1"/>
</dbReference>
<dbReference type="NCBIfam" id="NF002088">
    <property type="entry name" value="PRK00915.1-5"/>
    <property type="match status" value="1"/>
</dbReference>
<dbReference type="PANTHER" id="PTHR10277:SF9">
    <property type="entry name" value="2-ISOPROPYLMALATE SYNTHASE 1, CHLOROPLASTIC-RELATED"/>
    <property type="match status" value="1"/>
</dbReference>
<dbReference type="PANTHER" id="PTHR10277">
    <property type="entry name" value="HOMOCITRATE SYNTHASE-RELATED"/>
    <property type="match status" value="1"/>
</dbReference>
<dbReference type="Pfam" id="PF22617">
    <property type="entry name" value="HCS_D2"/>
    <property type="match status" value="1"/>
</dbReference>
<dbReference type="Pfam" id="PF00682">
    <property type="entry name" value="HMGL-like"/>
    <property type="match status" value="1"/>
</dbReference>
<dbReference type="Pfam" id="PF08502">
    <property type="entry name" value="LeuA_dimer"/>
    <property type="match status" value="1"/>
</dbReference>
<dbReference type="SMART" id="SM00917">
    <property type="entry name" value="LeuA_dimer"/>
    <property type="match status" value="1"/>
</dbReference>
<dbReference type="SUPFAM" id="SSF110921">
    <property type="entry name" value="2-isopropylmalate synthase LeuA, allosteric (dimerisation) domain"/>
    <property type="match status" value="1"/>
</dbReference>
<dbReference type="SUPFAM" id="SSF51569">
    <property type="entry name" value="Aldolase"/>
    <property type="match status" value="1"/>
</dbReference>
<dbReference type="PROSITE" id="PS50991">
    <property type="entry name" value="PYR_CT"/>
    <property type="match status" value="1"/>
</dbReference>
<evidence type="ECO:0000255" key="1">
    <source>
        <dbReference type="HAMAP-Rule" id="MF_01025"/>
    </source>
</evidence>
<accession>P58899</accession>